<protein>
    <recommendedName>
        <fullName evidence="4">Tungstate uptake system permease protein TupB</fullName>
    </recommendedName>
</protein>
<comment type="function">
    <text evidence="5">Part of an ABC transporter complex involved in tungstate uptake. Probably responsible for the translocation of the substrate across the membrane.</text>
</comment>
<comment type="subunit">
    <text evidence="4">The complex is composed of two ATP-binding proteins (TupC), two transmembrane proteins (TupB) and a solute-binding protein (TupA).</text>
</comment>
<comment type="subcellular location">
    <subcellularLocation>
        <location evidence="4">Cell membrane</location>
        <topology evidence="1">Multi-pass membrane protein</topology>
    </subcellularLocation>
</comment>
<comment type="similarity">
    <text evidence="4">Belongs to the binding-protein-dependent transport system permease family.</text>
</comment>
<organism>
    <name type="scientific">Peptoclostridium acidaminophilum</name>
    <name type="common">Eubacterium acidaminophilum</name>
    <dbReference type="NCBI Taxonomy" id="1731"/>
    <lineage>
        <taxon>Bacteria</taxon>
        <taxon>Bacillati</taxon>
        <taxon>Bacillota</taxon>
        <taxon>Clostridia</taxon>
        <taxon>Peptostreptococcales</taxon>
        <taxon>Peptoclostridiaceae</taxon>
        <taxon>Peptoclostridium</taxon>
    </lineage>
</organism>
<sequence>MEYIAEGFRAAMELLVSFDPQVYTIIFLSVFVSSTATAIAAAVSIPLGIFAGISNFRLKRLFSKVLYSLMSVPSVIVGLVVAIGLSRRGPLGFMQLLYTPTAMIIAQALLVFPLCLGLTYSLSKNRGSEIERIGKTLGAGKLQVIILIIRELKAELFINVVTTFSRAISEVGAVMIVGGNIKGHTRVITTSIAMLNSMGDYPMAIALGLVLLMISFAINAVIYSLQEE</sequence>
<reference key="1">
    <citation type="journal article" date="2001" name="J. Biol. Chem.">
        <title>Tungstate uptake by a highly specific ABC transporter in Eubacterium acidaminophilum.</title>
        <authorList>
            <person name="Makdessi K."/>
            <person name="Andreesen J.R."/>
            <person name="Pich A."/>
        </authorList>
    </citation>
    <scope>NUCLEOTIDE SEQUENCE [GENOMIC DNA]</scope>
    <scope>PROBABLE FUNCTION IN TUNGSTATE UPTAKE</scope>
    <source>
        <strain>ATCC 49065 / DSM 3953 / al-2</strain>
    </source>
</reference>
<dbReference type="EMBL" id="AJ291988">
    <property type="protein sequence ID" value="CAC40783.1"/>
    <property type="molecule type" value="Genomic_DNA"/>
</dbReference>
<dbReference type="SMR" id="Q93KD5"/>
<dbReference type="TCDB" id="3.A.1.6.2">
    <property type="family name" value="the atp-binding cassette (abc) superfamily"/>
</dbReference>
<dbReference type="GO" id="GO:0005886">
    <property type="term" value="C:plasma membrane"/>
    <property type="evidence" value="ECO:0007669"/>
    <property type="project" value="UniProtKB-SubCell"/>
</dbReference>
<dbReference type="GO" id="GO:0055085">
    <property type="term" value="P:transmembrane transport"/>
    <property type="evidence" value="ECO:0007669"/>
    <property type="project" value="InterPro"/>
</dbReference>
<dbReference type="CDD" id="cd06261">
    <property type="entry name" value="TM_PBP2"/>
    <property type="match status" value="1"/>
</dbReference>
<dbReference type="Gene3D" id="1.10.3720.10">
    <property type="entry name" value="MetI-like"/>
    <property type="match status" value="1"/>
</dbReference>
<dbReference type="InterPro" id="IPR049783">
    <property type="entry name" value="ABC_perm_TupB-like"/>
</dbReference>
<dbReference type="InterPro" id="IPR000515">
    <property type="entry name" value="MetI-like"/>
</dbReference>
<dbReference type="InterPro" id="IPR035906">
    <property type="entry name" value="MetI-like_sf"/>
</dbReference>
<dbReference type="NCBIfam" id="NF038017">
    <property type="entry name" value="ABC_perm1"/>
    <property type="match status" value="1"/>
</dbReference>
<dbReference type="PANTHER" id="PTHR43632">
    <property type="entry name" value="PERMEASE COMPONENT OF TUNGSTATE ABC TRANSPORTER"/>
    <property type="match status" value="1"/>
</dbReference>
<dbReference type="PANTHER" id="PTHR43632:SF1">
    <property type="entry name" value="PERMEASE COMPONENT OF TUNGSTATE ABC TRANSPORTER"/>
    <property type="match status" value="1"/>
</dbReference>
<dbReference type="Pfam" id="PF00528">
    <property type="entry name" value="BPD_transp_1"/>
    <property type="match status" value="1"/>
</dbReference>
<dbReference type="SUPFAM" id="SSF161098">
    <property type="entry name" value="MetI-like"/>
    <property type="match status" value="1"/>
</dbReference>
<dbReference type="PROSITE" id="PS50928">
    <property type="entry name" value="ABC_TM1"/>
    <property type="match status" value="1"/>
</dbReference>
<evidence type="ECO:0000255" key="1"/>
<evidence type="ECO:0000255" key="2">
    <source>
        <dbReference type="PROSITE-ProRule" id="PRU00441"/>
    </source>
</evidence>
<evidence type="ECO:0000303" key="3">
    <source>
    </source>
</evidence>
<evidence type="ECO:0000305" key="4"/>
<evidence type="ECO:0000305" key="5">
    <source>
    </source>
</evidence>
<name>TUPB_PEPAC</name>
<gene>
    <name evidence="3" type="primary">tupB</name>
</gene>
<keyword id="KW-1003">Cell membrane</keyword>
<keyword id="KW-0472">Membrane</keyword>
<keyword id="KW-0812">Transmembrane</keyword>
<keyword id="KW-1133">Transmembrane helix</keyword>
<keyword id="KW-0813">Transport</keyword>
<accession>Q93KD5</accession>
<feature type="chain" id="PRO_0000435510" description="Tungstate uptake system permease protein TupB">
    <location>
        <begin position="1"/>
        <end position="228"/>
    </location>
</feature>
<feature type="transmembrane region" description="Helical" evidence="2">
    <location>
        <begin position="25"/>
        <end position="45"/>
    </location>
</feature>
<feature type="transmembrane region" description="Helical" evidence="2">
    <location>
        <begin position="65"/>
        <end position="85"/>
    </location>
</feature>
<feature type="transmembrane region" description="Helical" evidence="2">
    <location>
        <begin position="102"/>
        <end position="122"/>
    </location>
</feature>
<feature type="transmembrane region" description="Helical" evidence="2">
    <location>
        <begin position="144"/>
        <end position="164"/>
    </location>
</feature>
<feature type="transmembrane region" description="Helical" evidence="2">
    <location>
        <begin position="203"/>
        <end position="223"/>
    </location>
</feature>
<feature type="domain" description="ABC transmembrane type-1" evidence="2">
    <location>
        <begin position="26"/>
        <end position="222"/>
    </location>
</feature>
<proteinExistence type="evidence at protein level"/>